<accession>I1RNL0</accession>
<accession>A0A0E0SN67</accession>
<keyword id="KW-0444">Lipid biosynthesis</keyword>
<keyword id="KW-0443">Lipid metabolism</keyword>
<keyword id="KW-0472">Membrane</keyword>
<keyword id="KW-0489">Methyltransferase</keyword>
<keyword id="KW-1185">Reference proteome</keyword>
<keyword id="KW-0949">S-adenosyl-L-methionine</keyword>
<keyword id="KW-0746">Sphingolipid metabolism</keyword>
<keyword id="KW-0808">Transferase</keyword>
<keyword id="KW-0812">Transmembrane</keyword>
<keyword id="KW-1133">Transmembrane helix</keyword>
<feature type="chain" id="PRO_0000434801" description="Sphingolipid C9-methyltransferase 2">
    <location>
        <begin position="1"/>
        <end position="521"/>
    </location>
</feature>
<feature type="transmembrane region" description="Helical" evidence="3">
    <location>
        <begin position="60"/>
        <end position="80"/>
    </location>
</feature>
<feature type="transmembrane region" description="Helical" evidence="3">
    <location>
        <begin position="85"/>
        <end position="105"/>
    </location>
</feature>
<feature type="binding site" evidence="2">
    <location>
        <begin position="225"/>
        <end position="226"/>
    </location>
    <ligand>
        <name>S-adenosyl-L-methionine</name>
        <dbReference type="ChEBI" id="CHEBI:59789"/>
    </ligand>
</feature>
<feature type="binding site" evidence="2">
    <location>
        <begin position="262"/>
        <end position="270"/>
    </location>
    <ligand>
        <name>S-adenosyl-L-methionine</name>
        <dbReference type="ChEBI" id="CHEBI:59789"/>
    </ligand>
</feature>
<feature type="binding site" evidence="2">
    <location>
        <begin position="288"/>
        <end position="293"/>
    </location>
    <ligand>
        <name>S-adenosyl-L-methionine</name>
        <dbReference type="ChEBI" id="CHEBI:59789"/>
    </ligand>
</feature>
<feature type="binding site" evidence="2">
    <location>
        <begin position="318"/>
        <end position="319"/>
    </location>
    <ligand>
        <name>S-adenosyl-L-methionine</name>
        <dbReference type="ChEBI" id="CHEBI:59789"/>
    </ligand>
</feature>
<protein>
    <recommendedName>
        <fullName evidence="5">Sphingolipid C9-methyltransferase 2</fullName>
        <shortName evidence="5">C-9-MT2</shortName>
        <ecNumber evidence="4">2.1.1.317</ecNumber>
    </recommendedName>
</protein>
<reference key="1">
    <citation type="journal article" date="2007" name="Science">
        <title>The Fusarium graminearum genome reveals a link between localized polymorphism and pathogen specialization.</title>
        <authorList>
            <person name="Cuomo C.A."/>
            <person name="Gueldener U."/>
            <person name="Xu J.-R."/>
            <person name="Trail F."/>
            <person name="Turgeon B.G."/>
            <person name="Di Pietro A."/>
            <person name="Walton J.D."/>
            <person name="Ma L.-J."/>
            <person name="Baker S.E."/>
            <person name="Rep M."/>
            <person name="Adam G."/>
            <person name="Antoniw J."/>
            <person name="Baldwin T."/>
            <person name="Calvo S.E."/>
            <person name="Chang Y.-L."/>
            <person name="DeCaprio D."/>
            <person name="Gale L.R."/>
            <person name="Gnerre S."/>
            <person name="Goswami R.S."/>
            <person name="Hammond-Kosack K."/>
            <person name="Harris L.J."/>
            <person name="Hilburn K."/>
            <person name="Kennell J.C."/>
            <person name="Kroken S."/>
            <person name="Magnuson J.K."/>
            <person name="Mannhaupt G."/>
            <person name="Mauceli E.W."/>
            <person name="Mewes H.-W."/>
            <person name="Mitterbauer R."/>
            <person name="Muehlbauer G."/>
            <person name="Muensterkoetter M."/>
            <person name="Nelson D."/>
            <person name="O'Donnell K."/>
            <person name="Ouellet T."/>
            <person name="Qi W."/>
            <person name="Quesneville H."/>
            <person name="Roncero M.I.G."/>
            <person name="Seong K.-Y."/>
            <person name="Tetko I.V."/>
            <person name="Urban M."/>
            <person name="Waalwijk C."/>
            <person name="Ward T.J."/>
            <person name="Yao J."/>
            <person name="Birren B.W."/>
            <person name="Kistler H.C."/>
        </authorList>
    </citation>
    <scope>NUCLEOTIDE SEQUENCE [LARGE SCALE GENOMIC DNA]</scope>
    <source>
        <strain>ATCC MYA-4620 / CBS 123657 / FGSC 9075 / NRRL 31084 / PH-1</strain>
    </source>
</reference>
<reference key="2">
    <citation type="journal article" date="2010" name="Nature">
        <title>Comparative genomics reveals mobile pathogenicity chromosomes in Fusarium.</title>
        <authorList>
            <person name="Ma L.-J."/>
            <person name="van der Does H.C."/>
            <person name="Borkovich K.A."/>
            <person name="Coleman J.J."/>
            <person name="Daboussi M.-J."/>
            <person name="Di Pietro A."/>
            <person name="Dufresne M."/>
            <person name="Freitag M."/>
            <person name="Grabherr M."/>
            <person name="Henrissat B."/>
            <person name="Houterman P.M."/>
            <person name="Kang S."/>
            <person name="Shim W.-B."/>
            <person name="Woloshuk C."/>
            <person name="Xie X."/>
            <person name="Xu J.-R."/>
            <person name="Antoniw J."/>
            <person name="Baker S.E."/>
            <person name="Bluhm B.H."/>
            <person name="Breakspear A."/>
            <person name="Brown D.W."/>
            <person name="Butchko R.A.E."/>
            <person name="Chapman S."/>
            <person name="Coulson R."/>
            <person name="Coutinho P.M."/>
            <person name="Danchin E.G.J."/>
            <person name="Diener A."/>
            <person name="Gale L.R."/>
            <person name="Gardiner D.M."/>
            <person name="Goff S."/>
            <person name="Hammond-Kosack K.E."/>
            <person name="Hilburn K."/>
            <person name="Hua-Van A."/>
            <person name="Jonkers W."/>
            <person name="Kazan K."/>
            <person name="Kodira C.D."/>
            <person name="Koehrsen M."/>
            <person name="Kumar L."/>
            <person name="Lee Y.-H."/>
            <person name="Li L."/>
            <person name="Manners J.M."/>
            <person name="Miranda-Saavedra D."/>
            <person name="Mukherjee M."/>
            <person name="Park G."/>
            <person name="Park J."/>
            <person name="Park S.-Y."/>
            <person name="Proctor R.H."/>
            <person name="Regev A."/>
            <person name="Ruiz-Roldan M.C."/>
            <person name="Sain D."/>
            <person name="Sakthikumar S."/>
            <person name="Sykes S."/>
            <person name="Schwartz D.C."/>
            <person name="Turgeon B.G."/>
            <person name="Wapinski I."/>
            <person name="Yoder O."/>
            <person name="Young S."/>
            <person name="Zeng Q."/>
            <person name="Zhou S."/>
            <person name="Galagan J."/>
            <person name="Cuomo C.A."/>
            <person name="Kistler H.C."/>
            <person name="Rep M."/>
        </authorList>
    </citation>
    <scope>GENOME REANNOTATION</scope>
    <source>
        <strain>ATCC MYA-4620 / CBS 123657 / FGSC 9075 / NRRL 31084 / PH-1</strain>
    </source>
</reference>
<reference key="3">
    <citation type="journal article" date="2015" name="BMC Genomics">
        <title>The completed genome sequence of the pathogenic ascomycete fungus Fusarium graminearum.</title>
        <authorList>
            <person name="King R."/>
            <person name="Urban M."/>
            <person name="Hammond-Kosack M.C.U."/>
            <person name="Hassani-Pak K."/>
            <person name="Hammond-Kosack K.E."/>
        </authorList>
    </citation>
    <scope>NUCLEOTIDE SEQUENCE [LARGE SCALE GENOMIC DNA]</scope>
    <source>
        <strain>ATCC MYA-4620 / CBS 123657 / FGSC 9075 / NRRL 31084 / PH-1</strain>
    </source>
</reference>
<reference key="4">
    <citation type="journal article" date="2009" name="Eukaryot. Cell">
        <title>Sphingolipid C-9 methyltransferases are important for growth and virulence but not for sensitivity to antifungal plant defensins in Fusarium graminearum.</title>
        <authorList>
            <person name="Ramamoorthy V."/>
            <person name="Cahoon E.B."/>
            <person name="Thokala M."/>
            <person name="Kaur J."/>
            <person name="Li J."/>
            <person name="Shah D.M."/>
        </authorList>
    </citation>
    <scope>FUNCTION</scope>
    <scope>DISRUPTION PHENOTYPE</scope>
    <source>
        <strain>ATCC MYA-4620 / CBS 123657 / FGSC 9075 / NRRL 31084 / PH-1</strain>
    </source>
</reference>
<organism>
    <name type="scientific">Gibberella zeae (strain ATCC MYA-4620 / CBS 123657 / FGSC 9075 / NRRL 31084 / PH-1)</name>
    <name type="common">Wheat head blight fungus</name>
    <name type="synonym">Fusarium graminearum</name>
    <dbReference type="NCBI Taxonomy" id="229533"/>
    <lineage>
        <taxon>Eukaryota</taxon>
        <taxon>Fungi</taxon>
        <taxon>Dikarya</taxon>
        <taxon>Ascomycota</taxon>
        <taxon>Pezizomycotina</taxon>
        <taxon>Sordariomycetes</taxon>
        <taxon>Hypocreomycetidae</taxon>
        <taxon>Hypocreales</taxon>
        <taxon>Nectriaceae</taxon>
        <taxon>Fusarium</taxon>
    </lineage>
</organism>
<proteinExistence type="inferred from homology"/>
<name>C9MT2_GIBZE</name>
<evidence type="ECO:0000250" key="1">
    <source>
        <dbReference type="UniProtKB" id="C4R7Z3"/>
    </source>
</evidence>
<evidence type="ECO:0000250" key="2">
    <source>
        <dbReference type="UniProtKB" id="P9WPB7"/>
    </source>
</evidence>
<evidence type="ECO:0000255" key="3"/>
<evidence type="ECO:0000269" key="4">
    <source>
    </source>
</evidence>
<evidence type="ECO:0000303" key="5">
    <source>
    </source>
</evidence>
<evidence type="ECO:0000305" key="6"/>
<evidence type="ECO:0000305" key="7">
    <source>
    </source>
</evidence>
<comment type="function">
    <text evidence="4">Catalyzes methylation of the sphingoid base component of glucosylceramides (GluCers) at the C9-position. Sphingolipid C9-methylation requires 4,8-desaturated ceramides as substrates. Glucosylceramides play important roles in growth, differentiation and pathogenicity. The methyl group at the C9-position distinguishes fungal glucosylceramides from those of plants and animals and may thus play a role in host-pathogen interactions enabling the host to recognize the fungal attack and initiate specific defense responses. However, C-9 methylation of GlcCers is not essential for the sensitivity of F.graminearum to plant defensins MsDef1 and RsAFP2.</text>
</comment>
<comment type="catalytic activity">
    <reaction evidence="4">
        <text>a (4E,8E)-4-sphinga-4,8-dienine ceramide + S-adenosyl-L-methionine = a 9-methyl-(4E,8E)-sphinga-4,8-dienine ceramide + S-adenosyl-L-homocysteine + H(+)</text>
        <dbReference type="Rhea" id="RHEA:46804"/>
        <dbReference type="ChEBI" id="CHEBI:15378"/>
        <dbReference type="ChEBI" id="CHEBI:57856"/>
        <dbReference type="ChEBI" id="CHEBI:59789"/>
        <dbReference type="ChEBI" id="CHEBI:85953"/>
        <dbReference type="ChEBI" id="CHEBI:87033"/>
        <dbReference type="EC" id="2.1.1.317"/>
    </reaction>
</comment>
<comment type="pathway">
    <text evidence="7">Lipid metabolism; sphingolipid metabolism.</text>
</comment>
<comment type="subcellular location">
    <subcellularLocation>
        <location evidence="1">Membrane</location>
        <topology evidence="3">Multi-pass membrane protein</topology>
    </subcellularLocation>
</comment>
<comment type="disruption phenotype">
    <text evidence="4">Produces 65 to 75% nonmethylated and 25 to 35% methylated GlcCers. Exhibits severe growth defects and produces abnormal conidia. Also exhibits drastically reduced disease symptoms in wheat and much-delayed disease symptoms in Arabidopsis thaliana. A double-knockout with its paralog MT1 is not viable.</text>
</comment>
<comment type="similarity">
    <text evidence="6">Belongs to the CFA/CMAS family.</text>
</comment>
<sequence length="521" mass="59853">MAEKSGVTGLDFEFVKTPAFPKPDFDKLENVGVPTTRYPAIKNAPLPADGSGSDTFNNYVLISILTIVPWWLSWKVGGGFKTTLFFAIIVDLPMLAAWWLTISAISPRKNEKVRLPNRGVEHYLEFKKEADRAKYRGTNKIPMETFYEMYFDGDVDFKGDCLEVMEQRHDWVSFRFTIGLIKFFLFGMMPEVIMHTRSQDEEQVRDHYDRGDDFYGWFLGPRMIYTSGIISDINREETLEELQDNKLTVVCEKIGLTKGDSMLDIGCGWGTLARFASEQYGANVTGVTLGRNQTAWGNSSMRKVGIPEEQSRIVCKDYRDIPVPVGGYKKITSLEMSEHVGIRHFSSFLKQVHDMLDDDGVFFLQYAGIRKAWQYEDLTWGLFMNKYIFPGADASTPLGWVVDKLEGTGFEIKHIDTIGVHYSATLWRWYRNWMDNRDKVEAKYGKRWFRIWEFFLAYSTIISRQGSATCFQITMVKNINSTHRIDGVETQFNLHGALDNCRADLQSWAAKNNVKTPSELL</sequence>
<gene>
    <name evidence="5" type="primary">MT2</name>
    <name type="ORF">FGRRES_05593</name>
    <name type="ORF">FGSG_05593</name>
</gene>
<dbReference type="EC" id="2.1.1.317" evidence="4"/>
<dbReference type="EMBL" id="DS231665">
    <property type="protein sequence ID" value="ESU11573.1"/>
    <property type="molecule type" value="Genomic_DNA"/>
</dbReference>
<dbReference type="EMBL" id="HG970334">
    <property type="protein sequence ID" value="CEF87880.1"/>
    <property type="molecule type" value="Genomic_DNA"/>
</dbReference>
<dbReference type="RefSeq" id="XP_011324149.1">
    <property type="nucleotide sequence ID" value="XM_011325847.1"/>
</dbReference>
<dbReference type="SMR" id="I1RNL0"/>
<dbReference type="STRING" id="229533.I1RNL0"/>
<dbReference type="GeneID" id="23552770"/>
<dbReference type="KEGG" id="fgr:FGSG_05593"/>
<dbReference type="VEuPathDB" id="FungiDB:FGRAMPH1_01G18285"/>
<dbReference type="eggNOG" id="ENOG502QS47">
    <property type="taxonomic scope" value="Eukaryota"/>
</dbReference>
<dbReference type="HOGENOM" id="CLU_026434_5_0_1"/>
<dbReference type="InParanoid" id="I1RNL0"/>
<dbReference type="OrthoDB" id="17791at110618"/>
<dbReference type="UniPathway" id="UPA00222"/>
<dbReference type="PHI-base" id="PHI:2409"/>
<dbReference type="Proteomes" id="UP000070720">
    <property type="component" value="Chromosome 3"/>
</dbReference>
<dbReference type="GO" id="GO:0016020">
    <property type="term" value="C:membrane"/>
    <property type="evidence" value="ECO:0007669"/>
    <property type="project" value="UniProtKB-SubCell"/>
</dbReference>
<dbReference type="GO" id="GO:0008168">
    <property type="term" value="F:methyltransferase activity"/>
    <property type="evidence" value="ECO:0007669"/>
    <property type="project" value="UniProtKB-KW"/>
</dbReference>
<dbReference type="GO" id="GO:0032259">
    <property type="term" value="P:methylation"/>
    <property type="evidence" value="ECO:0007669"/>
    <property type="project" value="UniProtKB-KW"/>
</dbReference>
<dbReference type="GO" id="GO:0006665">
    <property type="term" value="P:sphingolipid metabolic process"/>
    <property type="evidence" value="ECO:0007669"/>
    <property type="project" value="UniProtKB-UniPathway"/>
</dbReference>
<dbReference type="CDD" id="cd02440">
    <property type="entry name" value="AdoMet_MTases"/>
    <property type="match status" value="1"/>
</dbReference>
<dbReference type="Gene3D" id="3.40.50.150">
    <property type="entry name" value="Vaccinia Virus protein VP39"/>
    <property type="match status" value="1"/>
</dbReference>
<dbReference type="InterPro" id="IPR029063">
    <property type="entry name" value="SAM-dependent_MTases_sf"/>
</dbReference>
<dbReference type="InterPro" id="IPR052290">
    <property type="entry name" value="Sphingo_C9-MT"/>
</dbReference>
<dbReference type="PANTHER" id="PTHR45197:SF1">
    <property type="entry name" value="SPHINGOLIPID C9-METHYLTRANSFERASE A-RELATED"/>
    <property type="match status" value="1"/>
</dbReference>
<dbReference type="PANTHER" id="PTHR45197">
    <property type="entry name" value="SYNTHASE, PUTATIVE (AFU_ORTHOLOGUE AFUA_7G04190)-RELATED"/>
    <property type="match status" value="1"/>
</dbReference>
<dbReference type="Pfam" id="PF02353">
    <property type="entry name" value="CMAS"/>
    <property type="match status" value="1"/>
</dbReference>
<dbReference type="SUPFAM" id="SSF53335">
    <property type="entry name" value="S-adenosyl-L-methionine-dependent methyltransferases"/>
    <property type="match status" value="1"/>
</dbReference>